<organism>
    <name type="scientific">Pyramimonas orientalis virus</name>
    <name type="common">PoV01</name>
    <dbReference type="NCBI Taxonomy" id="455367"/>
    <lineage>
        <taxon>Viruses</taxon>
        <taxon>Varidnaviria</taxon>
        <taxon>Bamfordvirae</taxon>
        <taxon>Nucleocytoviricota</taxon>
        <taxon>Megaviricetes</taxon>
        <taxon>Imitervirales</taxon>
        <taxon>Allomimiviridae</taxon>
        <taxon>Heliosvirus</taxon>
        <taxon>Heliosvirus raunefjordenense</taxon>
    </lineage>
</organism>
<accession>A7U6F2</accession>
<organismHost>
    <name type="scientific">Pyramimonas plurioculata</name>
    <dbReference type="NCBI Taxonomy" id="36893"/>
</organismHost>
<gene>
    <name type="primary">dpo</name>
</gene>
<dbReference type="EC" id="2.7.7.7"/>
<dbReference type="EMBL" id="EU006633">
    <property type="protein sequence ID" value="ABU23717.1"/>
    <property type="molecule type" value="Genomic_DNA"/>
</dbReference>
<dbReference type="SMR" id="A7U6F2"/>
<dbReference type="GO" id="GO:0008296">
    <property type="term" value="F:3'-5'-DNA exonuclease activity"/>
    <property type="evidence" value="ECO:0007669"/>
    <property type="project" value="TreeGrafter"/>
</dbReference>
<dbReference type="GO" id="GO:0003677">
    <property type="term" value="F:DNA binding"/>
    <property type="evidence" value="ECO:0007669"/>
    <property type="project" value="UniProtKB-KW"/>
</dbReference>
<dbReference type="GO" id="GO:0003887">
    <property type="term" value="F:DNA-directed DNA polymerase activity"/>
    <property type="evidence" value="ECO:0007669"/>
    <property type="project" value="UniProtKB-KW"/>
</dbReference>
<dbReference type="GO" id="GO:0000166">
    <property type="term" value="F:nucleotide binding"/>
    <property type="evidence" value="ECO:0007669"/>
    <property type="project" value="InterPro"/>
</dbReference>
<dbReference type="GO" id="GO:0006287">
    <property type="term" value="P:base-excision repair, gap-filling"/>
    <property type="evidence" value="ECO:0007669"/>
    <property type="project" value="TreeGrafter"/>
</dbReference>
<dbReference type="GO" id="GO:0045004">
    <property type="term" value="P:DNA replication proofreading"/>
    <property type="evidence" value="ECO:0007669"/>
    <property type="project" value="TreeGrafter"/>
</dbReference>
<dbReference type="GO" id="GO:0006297">
    <property type="term" value="P:nucleotide-excision repair, DNA gap filling"/>
    <property type="evidence" value="ECO:0007669"/>
    <property type="project" value="TreeGrafter"/>
</dbReference>
<dbReference type="GO" id="GO:0039693">
    <property type="term" value="P:viral DNA genome replication"/>
    <property type="evidence" value="ECO:0007669"/>
    <property type="project" value="UniProtKB-KW"/>
</dbReference>
<dbReference type="Gene3D" id="1.10.132.60">
    <property type="entry name" value="DNA polymerase family B, C-terminal domain"/>
    <property type="match status" value="1"/>
</dbReference>
<dbReference type="Gene3D" id="3.30.342.10">
    <property type="entry name" value="DNA Polymerase, chain B, domain 1"/>
    <property type="match status" value="1"/>
</dbReference>
<dbReference type="Gene3D" id="1.10.287.690">
    <property type="entry name" value="Helix hairpin bin"/>
    <property type="match status" value="1"/>
</dbReference>
<dbReference type="Gene3D" id="3.90.1600.10">
    <property type="entry name" value="Palm domain of DNA polymerase"/>
    <property type="match status" value="1"/>
</dbReference>
<dbReference type="Gene3D" id="3.30.420.10">
    <property type="entry name" value="Ribonuclease H-like superfamily/Ribonuclease H"/>
    <property type="match status" value="1"/>
</dbReference>
<dbReference type="InterPro" id="IPR006172">
    <property type="entry name" value="DNA-dir_DNA_pol_B"/>
</dbReference>
<dbReference type="InterPro" id="IPR017964">
    <property type="entry name" value="DNA-dir_DNA_pol_B_CS"/>
</dbReference>
<dbReference type="InterPro" id="IPR006133">
    <property type="entry name" value="DNA-dir_DNA_pol_B_exonuc"/>
</dbReference>
<dbReference type="InterPro" id="IPR006134">
    <property type="entry name" value="DNA-dir_DNA_pol_B_multi_dom"/>
</dbReference>
<dbReference type="InterPro" id="IPR043502">
    <property type="entry name" value="DNA/RNA_pol_sf"/>
</dbReference>
<dbReference type="InterPro" id="IPR042087">
    <property type="entry name" value="DNA_pol_B_thumb"/>
</dbReference>
<dbReference type="InterPro" id="IPR023211">
    <property type="entry name" value="DNA_pol_palm_dom_sf"/>
</dbReference>
<dbReference type="InterPro" id="IPR050240">
    <property type="entry name" value="DNA_pol_type-B"/>
</dbReference>
<dbReference type="InterPro" id="IPR012337">
    <property type="entry name" value="RNaseH-like_sf"/>
</dbReference>
<dbReference type="InterPro" id="IPR036397">
    <property type="entry name" value="RNaseH_sf"/>
</dbReference>
<dbReference type="PANTHER" id="PTHR10322">
    <property type="entry name" value="DNA POLYMERASE CATALYTIC SUBUNIT"/>
    <property type="match status" value="1"/>
</dbReference>
<dbReference type="PANTHER" id="PTHR10322:SF23">
    <property type="entry name" value="DNA POLYMERASE DELTA CATALYTIC SUBUNIT"/>
    <property type="match status" value="1"/>
</dbReference>
<dbReference type="Pfam" id="PF00136">
    <property type="entry name" value="DNA_pol_B"/>
    <property type="match status" value="2"/>
</dbReference>
<dbReference type="Pfam" id="PF03104">
    <property type="entry name" value="DNA_pol_B_exo1"/>
    <property type="match status" value="2"/>
</dbReference>
<dbReference type="PRINTS" id="PR00106">
    <property type="entry name" value="DNAPOLB"/>
</dbReference>
<dbReference type="SMART" id="SM00486">
    <property type="entry name" value="POLBc"/>
    <property type="match status" value="1"/>
</dbReference>
<dbReference type="SUPFAM" id="SSF56672">
    <property type="entry name" value="DNA/RNA polymerases"/>
    <property type="match status" value="1"/>
</dbReference>
<dbReference type="SUPFAM" id="SSF53098">
    <property type="entry name" value="Ribonuclease H-like"/>
    <property type="match status" value="1"/>
</dbReference>
<dbReference type="PROSITE" id="PS00116">
    <property type="entry name" value="DNA_POLYMERASE_B"/>
    <property type="match status" value="1"/>
</dbReference>
<keyword id="KW-0235">DNA replication</keyword>
<keyword id="KW-0238">DNA-binding</keyword>
<keyword id="KW-0239">DNA-directed DNA polymerase</keyword>
<keyword id="KW-0548">Nucleotidyltransferase</keyword>
<keyword id="KW-0808">Transferase</keyword>
<keyword id="KW-1194">Viral DNA replication</keyword>
<feature type="chain" id="PRO_0000338008" description="DNA polymerase">
    <location>
        <begin position="1"/>
        <end position="1206"/>
    </location>
</feature>
<protein>
    <recommendedName>
        <fullName>DNA polymerase</fullName>
        <ecNumber>2.7.7.7</ecNumber>
    </recommendedName>
</protein>
<sequence length="1206" mass="138160">MNFRDHSISLDESKNACFQVIDWYHFDYTNEDSNESQYIIKMFGVTEEGYSLCVNVTDFQPHFYISSKTKDKFTQTELDDLEEYIINKLPYNFKNSLSVKQVRKKSIWGFTNNVYKQYIKLSFQNIMSMYITRKMLQYRIKVGRVQVQFDLNESNIDPFLRFIHIQNIKPGGWISIDEYTTDVDDELESKCQINITTSCENVQPLDCNKVAPVNIMSFDIECTSSSGDFPVPIKTYKKTAEEISDLYNSFKSDSHHDGFIPALYKCFMGIYTDEKEFMNDCGTYCNKNLLECNTNNIKFAKVYPKKKKIDLETIFQKLQGYTDTIVDILKNRSKHTVFQEENDGLEPSVVNQLEVLLNSFLPPLKGDPIIQIGSTIHQYGSTKCSYKNVITLDTCNDIPGVDVITCKTETALIKEWCKLIHRVDPDIMTGYNIFGFDFDYIYKRALELGCEKYVLGCSRLEGHKSKFKEKMLASSALGENLLKYVEMEGRVFVDLMKVVQREYNLDSYKLDNVASHFISGKVKTHNKTTLHLDSAAGINVGDYIKLNNTYKCMVLSVDSNIIVIDTELDEKIVTWGLAKDDVSPKEIFACQKGTSADRAKIAKYCVQDCALCNMLIIKLEVFANNMGMANVCLVPLSYIFMRGQGIKIFSLVAKQCRDDNFIIPLIKFDQDSEEVEGYEGAIVLDPIPGIYVEAPISVMDYASLYPSSMISENISHDSIVLDKKYDNLPGVEYVDVTYDIFTGVGDKKTKVDEKTCRYAQFKNNEKGVLPRILMKLLSQRKSTRKQILHKTVTTNDNRSFTGLVDENDDSVTIKTTDNNTITLSRNEILSSVDTYNDFMKAILDGLQLAYKITANSLYGQVGARTSPIYMKELAASTTATGRNLIMKAKEFMETNYGADVVYGDTDSIFVDFKVKEKYGLLDKDALQKSIDISVKASDAFKKELKAPHDLEYEKTFFPFIILSKKKYVGNLYEHDVNKYKQKSMGIVLKRRDNANIVKIVYGGIIDILLNRQNISFAINFLKESLRKLVNGEFHMDDLVITKTLRTTYKDPTRIAHKVLADRMRNRDPGSAPQSSDRVPYAYIEHDIKNKSLLQGDKIEHPSYIKENNVKIDYIFYITNQLMKPICQLMALALFQIPKSSKPEIYERKLKSLTLDYEGNKKRAIDKVSDLKQKEIQKLLFDETLVHLNNKRMGNREILEFFSVTPV</sequence>
<proteinExistence type="inferred from homology"/>
<reference key="1">
    <citation type="journal article" date="2008" name="Appl. Environ. Microbiol.">
        <title>Phylogenetic analysis of members of the Phycodnaviridae virus family, using amplified fragments of the major capsid protein gene.</title>
        <authorList>
            <person name="Larsen J.B."/>
            <person name="Larsen A."/>
            <person name="Bratbak G."/>
            <person name="Sandaa R.A."/>
        </authorList>
    </citation>
    <scope>NUCLEOTIDE SEQUENCE [GENOMIC DNA]</scope>
</reference>
<evidence type="ECO:0000305" key="1"/>
<comment type="catalytic activity">
    <reaction>
        <text>DNA(n) + a 2'-deoxyribonucleoside 5'-triphosphate = DNA(n+1) + diphosphate</text>
        <dbReference type="Rhea" id="RHEA:22508"/>
        <dbReference type="Rhea" id="RHEA-COMP:17339"/>
        <dbReference type="Rhea" id="RHEA-COMP:17340"/>
        <dbReference type="ChEBI" id="CHEBI:33019"/>
        <dbReference type="ChEBI" id="CHEBI:61560"/>
        <dbReference type="ChEBI" id="CHEBI:173112"/>
        <dbReference type="EC" id="2.7.7.7"/>
    </reaction>
</comment>
<comment type="similarity">
    <text evidence="1">Belongs to the DNA polymerase type-B family.</text>
</comment>
<name>DPOL_POV01</name>